<evidence type="ECO:0000255" key="1">
    <source>
        <dbReference type="HAMAP-Rule" id="MF_01023"/>
    </source>
</evidence>
<sequence>MSTASVMDLVRDDLRAFAGYASARTSALQGDVWLNANESAWGNPADPDASTRRYPDPQPKGLRAALAQLYGCATEQLLIGRGSDEAIDLLVRGLCVPERDAVVVTPPVFGMYAVCARLQSAPLVEVPLVDGADGLHADVPAIVQAALDAKAKLVFLCSPSNPAGSAIPLAEIEAALQALQGKAVVVVDEAYGEFSDVPSAIGLLARYDNLAVLRTLSKAHALAAARIGSLIANAELIALLRRCQAPYPVPTPCAVMAEQALSAPALAVTQRRVTEIRAERARLHAALVQVAGVRQVYPSQGNFLLVRFDDAEAAFQALLEAGVVVRDQRAVPRLSDALRITIGTPDQNDRVLGALQRKQEAA</sequence>
<gene>
    <name evidence="1" type="primary">hisC</name>
    <name type="ordered locus">XCC1810</name>
</gene>
<protein>
    <recommendedName>
        <fullName evidence="1">Histidinol-phosphate aminotransferase</fullName>
        <ecNumber evidence="1">2.6.1.9</ecNumber>
    </recommendedName>
    <alternativeName>
        <fullName evidence="1">Imidazole acetol-phosphate transaminase</fullName>
    </alternativeName>
</protein>
<comment type="catalytic activity">
    <reaction evidence="1">
        <text>L-histidinol phosphate + 2-oxoglutarate = 3-(imidazol-4-yl)-2-oxopropyl phosphate + L-glutamate</text>
        <dbReference type="Rhea" id="RHEA:23744"/>
        <dbReference type="ChEBI" id="CHEBI:16810"/>
        <dbReference type="ChEBI" id="CHEBI:29985"/>
        <dbReference type="ChEBI" id="CHEBI:57766"/>
        <dbReference type="ChEBI" id="CHEBI:57980"/>
        <dbReference type="EC" id="2.6.1.9"/>
    </reaction>
</comment>
<comment type="cofactor">
    <cofactor evidence="1">
        <name>pyridoxal 5'-phosphate</name>
        <dbReference type="ChEBI" id="CHEBI:597326"/>
    </cofactor>
</comment>
<comment type="pathway">
    <text evidence="1">Amino-acid biosynthesis; L-histidine biosynthesis; L-histidine from 5-phospho-alpha-D-ribose 1-diphosphate: step 7/9.</text>
</comment>
<comment type="subunit">
    <text evidence="1">Homodimer.</text>
</comment>
<comment type="similarity">
    <text evidence="1">Belongs to the class-II pyridoxal-phosphate-dependent aminotransferase family. Histidinol-phosphate aminotransferase subfamily.</text>
</comment>
<dbReference type="EC" id="2.6.1.9" evidence="1"/>
<dbReference type="EMBL" id="AE008922">
    <property type="protein sequence ID" value="AAM41099.1"/>
    <property type="molecule type" value="Genomic_DNA"/>
</dbReference>
<dbReference type="RefSeq" id="NP_637175.1">
    <property type="nucleotide sequence ID" value="NC_003902.1"/>
</dbReference>
<dbReference type="RefSeq" id="WP_011036980.1">
    <property type="nucleotide sequence ID" value="NC_003902.1"/>
</dbReference>
<dbReference type="SMR" id="P58892"/>
<dbReference type="STRING" id="190485.XCC1810"/>
<dbReference type="EnsemblBacteria" id="AAM41099">
    <property type="protein sequence ID" value="AAM41099"/>
    <property type="gene ID" value="XCC1810"/>
</dbReference>
<dbReference type="KEGG" id="xcc:XCC1810"/>
<dbReference type="PATRIC" id="fig|190485.4.peg.1930"/>
<dbReference type="eggNOG" id="COG0079">
    <property type="taxonomic scope" value="Bacteria"/>
</dbReference>
<dbReference type="HOGENOM" id="CLU_017584_3_1_6"/>
<dbReference type="OrthoDB" id="9813612at2"/>
<dbReference type="UniPathway" id="UPA00031">
    <property type="reaction ID" value="UER00012"/>
</dbReference>
<dbReference type="Proteomes" id="UP000001010">
    <property type="component" value="Chromosome"/>
</dbReference>
<dbReference type="GO" id="GO:0004400">
    <property type="term" value="F:histidinol-phosphate transaminase activity"/>
    <property type="evidence" value="ECO:0007669"/>
    <property type="project" value="UniProtKB-UniRule"/>
</dbReference>
<dbReference type="GO" id="GO:0030170">
    <property type="term" value="F:pyridoxal phosphate binding"/>
    <property type="evidence" value="ECO:0007669"/>
    <property type="project" value="InterPro"/>
</dbReference>
<dbReference type="GO" id="GO:0000105">
    <property type="term" value="P:L-histidine biosynthetic process"/>
    <property type="evidence" value="ECO:0007669"/>
    <property type="project" value="UniProtKB-UniRule"/>
</dbReference>
<dbReference type="CDD" id="cd00609">
    <property type="entry name" value="AAT_like"/>
    <property type="match status" value="1"/>
</dbReference>
<dbReference type="Gene3D" id="3.90.1150.10">
    <property type="entry name" value="Aspartate Aminotransferase, domain 1"/>
    <property type="match status" value="1"/>
</dbReference>
<dbReference type="Gene3D" id="3.40.640.10">
    <property type="entry name" value="Type I PLP-dependent aspartate aminotransferase-like (Major domain)"/>
    <property type="match status" value="1"/>
</dbReference>
<dbReference type="HAMAP" id="MF_01023">
    <property type="entry name" value="HisC_aminotrans_2"/>
    <property type="match status" value="1"/>
</dbReference>
<dbReference type="InterPro" id="IPR004839">
    <property type="entry name" value="Aminotransferase_I/II_large"/>
</dbReference>
<dbReference type="InterPro" id="IPR005861">
    <property type="entry name" value="HisP_aminotrans"/>
</dbReference>
<dbReference type="InterPro" id="IPR015424">
    <property type="entry name" value="PyrdxlP-dep_Trfase"/>
</dbReference>
<dbReference type="InterPro" id="IPR015421">
    <property type="entry name" value="PyrdxlP-dep_Trfase_major"/>
</dbReference>
<dbReference type="InterPro" id="IPR015422">
    <property type="entry name" value="PyrdxlP-dep_Trfase_small"/>
</dbReference>
<dbReference type="NCBIfam" id="TIGR01141">
    <property type="entry name" value="hisC"/>
    <property type="match status" value="1"/>
</dbReference>
<dbReference type="PANTHER" id="PTHR42885:SF2">
    <property type="entry name" value="HISTIDINOL-PHOSPHATE AMINOTRANSFERASE"/>
    <property type="match status" value="1"/>
</dbReference>
<dbReference type="PANTHER" id="PTHR42885">
    <property type="entry name" value="HISTIDINOL-PHOSPHATE AMINOTRANSFERASE-RELATED"/>
    <property type="match status" value="1"/>
</dbReference>
<dbReference type="Pfam" id="PF00155">
    <property type="entry name" value="Aminotran_1_2"/>
    <property type="match status" value="1"/>
</dbReference>
<dbReference type="SUPFAM" id="SSF53383">
    <property type="entry name" value="PLP-dependent transferases"/>
    <property type="match status" value="1"/>
</dbReference>
<keyword id="KW-0028">Amino-acid biosynthesis</keyword>
<keyword id="KW-0032">Aminotransferase</keyword>
<keyword id="KW-0368">Histidine biosynthesis</keyword>
<keyword id="KW-0663">Pyridoxal phosphate</keyword>
<keyword id="KW-1185">Reference proteome</keyword>
<keyword id="KW-0808">Transferase</keyword>
<accession>P58892</accession>
<proteinExistence type="inferred from homology"/>
<organism>
    <name type="scientific">Xanthomonas campestris pv. campestris (strain ATCC 33913 / DSM 3586 / NCPPB 528 / LMG 568 / P 25)</name>
    <dbReference type="NCBI Taxonomy" id="190485"/>
    <lineage>
        <taxon>Bacteria</taxon>
        <taxon>Pseudomonadati</taxon>
        <taxon>Pseudomonadota</taxon>
        <taxon>Gammaproteobacteria</taxon>
        <taxon>Lysobacterales</taxon>
        <taxon>Lysobacteraceae</taxon>
        <taxon>Xanthomonas</taxon>
    </lineage>
</organism>
<name>HIS8_XANCP</name>
<feature type="chain" id="PRO_0000153481" description="Histidinol-phosphate aminotransferase">
    <location>
        <begin position="1"/>
        <end position="362"/>
    </location>
</feature>
<feature type="modified residue" description="N6-(pyridoxal phosphate)lysine" evidence="1">
    <location>
        <position position="218"/>
    </location>
</feature>
<reference key="1">
    <citation type="journal article" date="2002" name="Nature">
        <title>Comparison of the genomes of two Xanthomonas pathogens with differing host specificities.</title>
        <authorList>
            <person name="da Silva A.C.R."/>
            <person name="Ferro J.A."/>
            <person name="Reinach F.C."/>
            <person name="Farah C.S."/>
            <person name="Furlan L.R."/>
            <person name="Quaggio R.B."/>
            <person name="Monteiro-Vitorello C.B."/>
            <person name="Van Sluys M.A."/>
            <person name="Almeida N.F. Jr."/>
            <person name="Alves L.M.C."/>
            <person name="do Amaral A.M."/>
            <person name="Bertolini M.C."/>
            <person name="Camargo L.E.A."/>
            <person name="Camarotte G."/>
            <person name="Cannavan F."/>
            <person name="Cardozo J."/>
            <person name="Chambergo F."/>
            <person name="Ciapina L.P."/>
            <person name="Cicarelli R.M.B."/>
            <person name="Coutinho L.L."/>
            <person name="Cursino-Santos J.R."/>
            <person name="El-Dorry H."/>
            <person name="Faria J.B."/>
            <person name="Ferreira A.J.S."/>
            <person name="Ferreira R.C.C."/>
            <person name="Ferro M.I.T."/>
            <person name="Formighieri E.F."/>
            <person name="Franco M.C."/>
            <person name="Greggio C.C."/>
            <person name="Gruber A."/>
            <person name="Katsuyama A.M."/>
            <person name="Kishi L.T."/>
            <person name="Leite R.P."/>
            <person name="Lemos E.G.M."/>
            <person name="Lemos M.V.F."/>
            <person name="Locali E.C."/>
            <person name="Machado M.A."/>
            <person name="Madeira A.M.B.N."/>
            <person name="Martinez-Rossi N.M."/>
            <person name="Martins E.C."/>
            <person name="Meidanis J."/>
            <person name="Menck C.F.M."/>
            <person name="Miyaki C.Y."/>
            <person name="Moon D.H."/>
            <person name="Moreira L.M."/>
            <person name="Novo M.T.M."/>
            <person name="Okura V.K."/>
            <person name="Oliveira M.C."/>
            <person name="Oliveira V.R."/>
            <person name="Pereira H.A."/>
            <person name="Rossi A."/>
            <person name="Sena J.A.D."/>
            <person name="Silva C."/>
            <person name="de Souza R.F."/>
            <person name="Spinola L.A.F."/>
            <person name="Takita M.A."/>
            <person name="Tamura R.E."/>
            <person name="Teixeira E.C."/>
            <person name="Tezza R.I.D."/>
            <person name="Trindade dos Santos M."/>
            <person name="Truffi D."/>
            <person name="Tsai S.M."/>
            <person name="White F.F."/>
            <person name="Setubal J.C."/>
            <person name="Kitajima J.P."/>
        </authorList>
    </citation>
    <scope>NUCLEOTIDE SEQUENCE [LARGE SCALE GENOMIC DNA]</scope>
    <source>
        <strain>ATCC 33913 / DSM 3586 / NCPPB 528 / LMG 568 / P 25</strain>
    </source>
</reference>